<feature type="chain" id="PRO_0000334556" description="Putative serpin-Z5">
    <location>
        <begin position="1"/>
        <end position="445"/>
    </location>
</feature>
<feature type="region of interest" description="RCL">
    <location>
        <begin position="356"/>
        <end position="380"/>
    </location>
</feature>
<feature type="site" description="Reactive bond" evidence="2">
    <location>
        <begin position="370"/>
        <end position="371"/>
    </location>
</feature>
<keyword id="KW-0646">Protease inhibitor</keyword>
<keyword id="KW-1185">Reference proteome</keyword>
<keyword id="KW-0722">Serine protease inhibitor</keyword>
<accession>Q53MD3</accession>
<accession>A0A0P0Y0Z8</accession>
<proteinExistence type="inferred from homology"/>
<dbReference type="EMBL" id="AC136971">
    <property type="protein sequence ID" value="AAX96216.1"/>
    <property type="molecule type" value="Genomic_DNA"/>
</dbReference>
<dbReference type="EMBL" id="DP000010">
    <property type="protein sequence ID" value="ABA92183.1"/>
    <property type="molecule type" value="Genomic_DNA"/>
</dbReference>
<dbReference type="EMBL" id="AP014967">
    <property type="protein sequence ID" value="BAT13333.1"/>
    <property type="molecule type" value="Genomic_DNA"/>
</dbReference>
<dbReference type="SMR" id="Q53MD3"/>
<dbReference type="FunCoup" id="Q53MD3">
    <property type="interactions" value="283"/>
</dbReference>
<dbReference type="STRING" id="39947.Q53MD3"/>
<dbReference type="PaxDb" id="39947-Q53MD3"/>
<dbReference type="EnsemblPlants" id="Os11t0232000-00">
    <property type="protein sequence ID" value="Os11t0232000-00"/>
    <property type="gene ID" value="Os11g0232000"/>
</dbReference>
<dbReference type="Gramene" id="Os11t0232000-00">
    <property type="protein sequence ID" value="Os11t0232000-00"/>
    <property type="gene ID" value="Os11g0232000"/>
</dbReference>
<dbReference type="eggNOG" id="KOG2392">
    <property type="taxonomic scope" value="Eukaryota"/>
</dbReference>
<dbReference type="HOGENOM" id="CLU_023330_4_2_1"/>
<dbReference type="InParanoid" id="Q53MD3"/>
<dbReference type="OMA" id="RHIDELY"/>
<dbReference type="OrthoDB" id="1063785at2759"/>
<dbReference type="Proteomes" id="UP000000763">
    <property type="component" value="Chromosome 11"/>
</dbReference>
<dbReference type="Proteomes" id="UP000059680">
    <property type="component" value="Chromosome 11"/>
</dbReference>
<dbReference type="GO" id="GO:0005615">
    <property type="term" value="C:extracellular space"/>
    <property type="evidence" value="ECO:0000318"/>
    <property type="project" value="GO_Central"/>
</dbReference>
<dbReference type="GO" id="GO:0004867">
    <property type="term" value="F:serine-type endopeptidase inhibitor activity"/>
    <property type="evidence" value="ECO:0007669"/>
    <property type="project" value="UniProtKB-KW"/>
</dbReference>
<dbReference type="CDD" id="cd02043">
    <property type="entry name" value="serpinP_plants"/>
    <property type="match status" value="1"/>
</dbReference>
<dbReference type="Gene3D" id="2.30.39.10">
    <property type="entry name" value="Alpha-1-antitrypsin, domain 1"/>
    <property type="match status" value="1"/>
</dbReference>
<dbReference type="Gene3D" id="3.30.497.10">
    <property type="entry name" value="Antithrombin, subunit I, domain 2"/>
    <property type="match status" value="1"/>
</dbReference>
<dbReference type="InterPro" id="IPR023796">
    <property type="entry name" value="Serpin_dom"/>
</dbReference>
<dbReference type="InterPro" id="IPR000215">
    <property type="entry name" value="Serpin_fam"/>
</dbReference>
<dbReference type="InterPro" id="IPR036186">
    <property type="entry name" value="Serpin_sf"/>
</dbReference>
<dbReference type="InterPro" id="IPR042178">
    <property type="entry name" value="Serpin_sf_1"/>
</dbReference>
<dbReference type="InterPro" id="IPR042185">
    <property type="entry name" value="Serpin_sf_2"/>
</dbReference>
<dbReference type="PANTHER" id="PTHR11461">
    <property type="entry name" value="SERINE PROTEASE INHIBITOR, SERPIN"/>
    <property type="match status" value="1"/>
</dbReference>
<dbReference type="PANTHER" id="PTHR11461:SF313">
    <property type="entry name" value="SERPIN-Z5-RELATED"/>
    <property type="match status" value="1"/>
</dbReference>
<dbReference type="Pfam" id="PF00079">
    <property type="entry name" value="Serpin"/>
    <property type="match status" value="1"/>
</dbReference>
<dbReference type="SMART" id="SM00093">
    <property type="entry name" value="SERPIN"/>
    <property type="match status" value="1"/>
</dbReference>
<dbReference type="SUPFAM" id="SSF56574">
    <property type="entry name" value="Serpins"/>
    <property type="match status" value="1"/>
</dbReference>
<comment type="function">
    <text evidence="1">Probable serine protease inhibitor.</text>
</comment>
<comment type="domain">
    <text evidence="1">The reactive center loop (RCL) extends out from the body of the protein and directs binding to the target protease. The protease cleaves the serpin at the reactive site within the RCL, establishing a covalent linkage between the carboxyl group of the serpin reactive site and the serine hydroxyl of the protease. The resulting inactive serpin-protease complex is highly stable (By similarity).</text>
</comment>
<comment type="similarity">
    <text evidence="3">Belongs to the serpin family.</text>
</comment>
<gene>
    <name type="ordered locus">Os11g0232000</name>
    <name type="ordered locus">LOC_Os11g12520</name>
</gene>
<evidence type="ECO:0000250" key="1"/>
<evidence type="ECO:0000255" key="2"/>
<evidence type="ECO:0000305" key="3"/>
<protein>
    <recommendedName>
        <fullName>Putative serpin-Z5</fullName>
    </recommendedName>
    <alternativeName>
        <fullName>OrysaZ5</fullName>
    </alternativeName>
</protein>
<reference key="1">
    <citation type="journal article" date="2005" name="BMC Biol.">
        <title>The sequence of rice chromosomes 11 and 12, rich in disease resistance genes and recent gene duplications.</title>
        <authorList>
            <consortium name="The rice chromosomes 11 and 12 sequencing consortia"/>
        </authorList>
    </citation>
    <scope>NUCLEOTIDE SEQUENCE [LARGE SCALE GENOMIC DNA]</scope>
    <source>
        <strain>cv. Nipponbare</strain>
    </source>
</reference>
<reference key="2">
    <citation type="journal article" date="2005" name="Nature">
        <title>The map-based sequence of the rice genome.</title>
        <authorList>
            <consortium name="International rice genome sequencing project (IRGSP)"/>
        </authorList>
    </citation>
    <scope>NUCLEOTIDE SEQUENCE [LARGE SCALE GENOMIC DNA]</scope>
    <source>
        <strain>cv. Nipponbare</strain>
    </source>
</reference>
<reference key="3">
    <citation type="journal article" date="2013" name="Rice">
        <title>Improvement of the Oryza sativa Nipponbare reference genome using next generation sequence and optical map data.</title>
        <authorList>
            <person name="Kawahara Y."/>
            <person name="de la Bastide M."/>
            <person name="Hamilton J.P."/>
            <person name="Kanamori H."/>
            <person name="McCombie W.R."/>
            <person name="Ouyang S."/>
            <person name="Schwartz D.C."/>
            <person name="Tanaka T."/>
            <person name="Wu J."/>
            <person name="Zhou S."/>
            <person name="Childs K.L."/>
            <person name="Davidson R.M."/>
            <person name="Lin H."/>
            <person name="Quesada-Ocampo L."/>
            <person name="Vaillancourt B."/>
            <person name="Sakai H."/>
            <person name="Lee S.S."/>
            <person name="Kim J."/>
            <person name="Numa H."/>
            <person name="Itoh T."/>
            <person name="Buell C.R."/>
            <person name="Matsumoto T."/>
        </authorList>
    </citation>
    <scope>GENOME REANNOTATION</scope>
    <source>
        <strain>cv. Nipponbare</strain>
    </source>
</reference>
<reference key="4">
    <citation type="journal article" date="2008" name="Funct. Integr. Genomics">
        <title>Serpins in plants and green algae.</title>
        <authorList>
            <person name="Roberts T.H."/>
            <person name="Hejgaard J."/>
        </authorList>
    </citation>
    <scope>GENE FAMILY</scope>
    <scope>NOMENCLATURE</scope>
</reference>
<sequence length="445" mass="47351">MAPPPPAAPPCPGLTELALRVARRIQAGGAPDGNLVFSPLSVYAALALVAAGAGGDTLAELLGVLGAGSRDELAGLAGRLAGRALADRSRAGGPRVSFVSGVWYDKTRTLSPSFRDAAVQSFMAETRAADFREKPGEAVNQINAWARKATNKLIDTVIDGGLPADTDVVVANAVYFKGKWKDPFTKALTKTGKFHRLDGAAVDASFMQRGTYYDTGDYIACHDGFKVLRLPYDDERRRSPASPPPPPSTPRFSLCVFLPDALDGLWDLLDEIASTPGFLQAKLPTRHASVGELKLPKFKLTFSGDIAGVLRGLGLDATFSDGEADFSKMVEDDGGRRPLSMRSLVHKAVIEVNEEGTEAAASAINMVCGMSMTPEPRPVPVDFVADHPFAFFVIEETTGAVVFAGHVLDPSSTAGALDDDDDDDEFVVMGCLRYLLDRCMAFVGV</sequence>
<organism>
    <name type="scientific">Oryza sativa subsp. japonica</name>
    <name type="common">Rice</name>
    <dbReference type="NCBI Taxonomy" id="39947"/>
    <lineage>
        <taxon>Eukaryota</taxon>
        <taxon>Viridiplantae</taxon>
        <taxon>Streptophyta</taxon>
        <taxon>Embryophyta</taxon>
        <taxon>Tracheophyta</taxon>
        <taxon>Spermatophyta</taxon>
        <taxon>Magnoliopsida</taxon>
        <taxon>Liliopsida</taxon>
        <taxon>Poales</taxon>
        <taxon>Poaceae</taxon>
        <taxon>BOP clade</taxon>
        <taxon>Oryzoideae</taxon>
        <taxon>Oryzeae</taxon>
        <taxon>Oryzinae</taxon>
        <taxon>Oryza</taxon>
        <taxon>Oryza sativa</taxon>
    </lineage>
</organism>
<name>SPZ5_ORYSJ</name>